<comment type="function">
    <text evidence="1">Catalyzes the radical-mediated synthesis of 7,8-didemethyl-8-hydroxy-5-deazariboflavin from 5-amino-5-(4-hydroxybenzyl)-6-(D-ribitylimino)-5,6-dihydrouracil.</text>
</comment>
<comment type="catalytic activity">
    <reaction evidence="1">
        <text>5-amino-5-(4-hydroxybenzyl)-6-(D-ribitylimino)-5,6-dihydrouracil + S-adenosyl-L-methionine = 7,8-didemethyl-8-hydroxy-5-deazariboflavin + 5'-deoxyadenosine + L-methionine + NH4(+) + H(+)</text>
        <dbReference type="Rhea" id="RHEA:55204"/>
        <dbReference type="ChEBI" id="CHEBI:15378"/>
        <dbReference type="ChEBI" id="CHEBI:17319"/>
        <dbReference type="ChEBI" id="CHEBI:28938"/>
        <dbReference type="ChEBI" id="CHEBI:57844"/>
        <dbReference type="ChEBI" id="CHEBI:59789"/>
        <dbReference type="ChEBI" id="CHEBI:59904"/>
        <dbReference type="ChEBI" id="CHEBI:85936"/>
        <dbReference type="EC" id="4.3.1.32"/>
    </reaction>
</comment>
<comment type="cofactor">
    <cofactor evidence="1">
        <name>[4Fe-4S] cluster</name>
        <dbReference type="ChEBI" id="CHEBI:49883"/>
    </cofactor>
    <text evidence="1">Binds 1 [4Fe-4S] cluster. The cluster is coordinated with 3 cysteines and an exchangeable S-adenosyl-L-methionine.</text>
</comment>
<comment type="pathway">
    <text evidence="1">Cofactor biosynthesis; coenzyme F0 biosynthesis.</text>
</comment>
<comment type="subunit">
    <text evidence="1">Consists of two subunits, CofG and CofH.</text>
</comment>
<comment type="similarity">
    <text evidence="1">Belongs to the radical SAM superfamily. CofG family.</text>
</comment>
<accession>Q8YR77</accession>
<dbReference type="EC" id="4.3.1.32" evidence="1"/>
<dbReference type="EMBL" id="BA000019">
    <property type="protein sequence ID" value="BAB75272.1"/>
    <property type="molecule type" value="Genomic_DNA"/>
</dbReference>
<dbReference type="PIR" id="AF2252">
    <property type="entry name" value="AF2252"/>
</dbReference>
<dbReference type="SMR" id="Q8YR77"/>
<dbReference type="STRING" id="103690.gene:10495614"/>
<dbReference type="KEGG" id="ana:alr3573"/>
<dbReference type="eggNOG" id="COG1060">
    <property type="taxonomic scope" value="Bacteria"/>
</dbReference>
<dbReference type="UniPathway" id="UPA00072"/>
<dbReference type="Proteomes" id="UP000002483">
    <property type="component" value="Chromosome"/>
</dbReference>
<dbReference type="GO" id="GO:0051539">
    <property type="term" value="F:4 iron, 4 sulfur cluster binding"/>
    <property type="evidence" value="ECO:0007669"/>
    <property type="project" value="UniProtKB-KW"/>
</dbReference>
<dbReference type="GO" id="GO:0044689">
    <property type="term" value="F:7,8-didemethyl-8-hydroxy-5-deazariboflavin synthase activity"/>
    <property type="evidence" value="ECO:0007669"/>
    <property type="project" value="UniProtKB-EC"/>
</dbReference>
<dbReference type="GO" id="GO:0005506">
    <property type="term" value="F:iron ion binding"/>
    <property type="evidence" value="ECO:0007669"/>
    <property type="project" value="UniProtKB-UniRule"/>
</dbReference>
<dbReference type="GO" id="GO:0016765">
    <property type="term" value="F:transferase activity, transferring alkyl or aryl (other than methyl) groups"/>
    <property type="evidence" value="ECO:0007669"/>
    <property type="project" value="InterPro"/>
</dbReference>
<dbReference type="CDD" id="cd01335">
    <property type="entry name" value="Radical_SAM"/>
    <property type="match status" value="1"/>
</dbReference>
<dbReference type="Gene3D" id="3.20.20.70">
    <property type="entry name" value="Aldolase class I"/>
    <property type="match status" value="1"/>
</dbReference>
<dbReference type="HAMAP" id="MF_01611">
    <property type="entry name" value="FO_synth_sub1"/>
    <property type="match status" value="1"/>
</dbReference>
<dbReference type="InterPro" id="IPR013785">
    <property type="entry name" value="Aldolase_TIM"/>
</dbReference>
<dbReference type="InterPro" id="IPR019939">
    <property type="entry name" value="CofG_family"/>
</dbReference>
<dbReference type="InterPro" id="IPR006638">
    <property type="entry name" value="Elp3/MiaA/NifB-like_rSAM"/>
</dbReference>
<dbReference type="InterPro" id="IPR034405">
    <property type="entry name" value="F420"/>
</dbReference>
<dbReference type="InterPro" id="IPR007197">
    <property type="entry name" value="rSAM"/>
</dbReference>
<dbReference type="NCBIfam" id="TIGR03550">
    <property type="entry name" value="F420_cofG"/>
    <property type="match status" value="1"/>
</dbReference>
<dbReference type="NCBIfam" id="NF004884">
    <property type="entry name" value="PRK06245.1"/>
    <property type="match status" value="1"/>
</dbReference>
<dbReference type="PANTHER" id="PTHR43076:SF15">
    <property type="entry name" value="7,8-DIDEMETHYL-8-HYDROXY-5-DEAZARIBOFLAVIN SYNTHASE"/>
    <property type="match status" value="1"/>
</dbReference>
<dbReference type="PANTHER" id="PTHR43076">
    <property type="entry name" value="FO SYNTHASE (COFH)"/>
    <property type="match status" value="1"/>
</dbReference>
<dbReference type="Pfam" id="PF04055">
    <property type="entry name" value="Radical_SAM"/>
    <property type="match status" value="1"/>
</dbReference>
<dbReference type="SFLD" id="SFLDF00294">
    <property type="entry name" value="7_8-didemethyl-8-hydroxy-5-dea"/>
    <property type="match status" value="1"/>
</dbReference>
<dbReference type="SFLD" id="SFLDG01064">
    <property type="entry name" value="F420__menaquinone_cofactor_bio"/>
    <property type="match status" value="1"/>
</dbReference>
<dbReference type="SMART" id="SM00729">
    <property type="entry name" value="Elp3"/>
    <property type="match status" value="1"/>
</dbReference>
<dbReference type="SUPFAM" id="SSF102114">
    <property type="entry name" value="Radical SAM enzymes"/>
    <property type="match status" value="1"/>
</dbReference>
<dbReference type="PROSITE" id="PS51918">
    <property type="entry name" value="RADICAL_SAM"/>
    <property type="match status" value="1"/>
</dbReference>
<sequence>MTVAKSTCASVSTKPAVGKPTNGIATYSPAYTIVPTYECFNRCTYCNFRTDPGESSWMTLSAAEDIFQRLQNEQVCEILILSGEVHPHSPKRQAWFQRIYDLCKLALTSGFLPHTNAGPLSFAEMQELKSVNVSMGLMLEQLTPKLLETVHRHAPSKLPELRLQQLEWAGDLQIPFTTGLLLGIGEGIDDCWETLETISKLHQRYHHIQEVILQPHSPGNQQTFDAPAFNPHQLPEVIAKARQILPPDITIQIPPNLVQDEQWLVACVEAGARDLGGIGPKDEVNPDYPHLQAEELREILQPVGWELVPRLPVYPQFDGWLSKELQASVRRWRELVIYF</sequence>
<organism>
    <name type="scientific">Nostoc sp. (strain PCC 7120 / SAG 25.82 / UTEX 2576)</name>
    <dbReference type="NCBI Taxonomy" id="103690"/>
    <lineage>
        <taxon>Bacteria</taxon>
        <taxon>Bacillati</taxon>
        <taxon>Cyanobacteriota</taxon>
        <taxon>Cyanophyceae</taxon>
        <taxon>Nostocales</taxon>
        <taxon>Nostocaceae</taxon>
        <taxon>Nostoc</taxon>
    </lineage>
</organism>
<feature type="chain" id="PRO_0000147755" description="7,8-didemethyl-8-hydroxy-5-deazariboflavin synthase">
    <location>
        <begin position="1"/>
        <end position="339"/>
    </location>
</feature>
<feature type="domain" description="Radical SAM core" evidence="2">
    <location>
        <begin position="25"/>
        <end position="256"/>
    </location>
</feature>
<feature type="binding site" evidence="1">
    <location>
        <position position="39"/>
    </location>
    <ligand>
        <name>[4Fe-4S] cluster</name>
        <dbReference type="ChEBI" id="CHEBI:49883"/>
        <note>4Fe-4S-S-AdoMet</note>
    </ligand>
</feature>
<feature type="binding site" evidence="1">
    <location>
        <position position="43"/>
    </location>
    <ligand>
        <name>[4Fe-4S] cluster</name>
        <dbReference type="ChEBI" id="CHEBI:49883"/>
        <note>4Fe-4S-S-AdoMet</note>
    </ligand>
</feature>
<feature type="binding site" evidence="1">
    <location>
        <position position="46"/>
    </location>
    <ligand>
        <name>[4Fe-4S] cluster</name>
        <dbReference type="ChEBI" id="CHEBI:49883"/>
        <note>4Fe-4S-S-AdoMet</note>
    </ligand>
</feature>
<proteinExistence type="inferred from homology"/>
<evidence type="ECO:0000255" key="1">
    <source>
        <dbReference type="HAMAP-Rule" id="MF_01611"/>
    </source>
</evidence>
<evidence type="ECO:0000255" key="2">
    <source>
        <dbReference type="PROSITE-ProRule" id="PRU01266"/>
    </source>
</evidence>
<keyword id="KW-0004">4Fe-4S</keyword>
<keyword id="KW-0408">Iron</keyword>
<keyword id="KW-0411">Iron-sulfur</keyword>
<keyword id="KW-0456">Lyase</keyword>
<keyword id="KW-0479">Metal-binding</keyword>
<keyword id="KW-1185">Reference proteome</keyword>
<keyword id="KW-0949">S-adenosyl-L-methionine</keyword>
<reference key="1">
    <citation type="journal article" date="2001" name="DNA Res.">
        <title>Complete genomic sequence of the filamentous nitrogen-fixing cyanobacterium Anabaena sp. strain PCC 7120.</title>
        <authorList>
            <person name="Kaneko T."/>
            <person name="Nakamura Y."/>
            <person name="Wolk C.P."/>
            <person name="Kuritz T."/>
            <person name="Sasamoto S."/>
            <person name="Watanabe A."/>
            <person name="Iriguchi M."/>
            <person name="Ishikawa A."/>
            <person name="Kawashima K."/>
            <person name="Kimura T."/>
            <person name="Kishida Y."/>
            <person name="Kohara M."/>
            <person name="Matsumoto M."/>
            <person name="Matsuno A."/>
            <person name="Muraki A."/>
            <person name="Nakazaki N."/>
            <person name="Shimpo S."/>
            <person name="Sugimoto M."/>
            <person name="Takazawa M."/>
            <person name="Yamada M."/>
            <person name="Yasuda M."/>
            <person name="Tabata S."/>
        </authorList>
    </citation>
    <scope>NUCLEOTIDE SEQUENCE [LARGE SCALE GENOMIC DNA]</scope>
    <source>
        <strain>PCC 7120 / SAG 25.82 / UTEX 2576</strain>
    </source>
</reference>
<gene>
    <name evidence="1" type="primary">cofG</name>
    <name type="ordered locus">alr3573</name>
</gene>
<name>COFG_NOSS1</name>
<protein>
    <recommendedName>
        <fullName evidence="1">7,8-didemethyl-8-hydroxy-5-deazariboflavin synthase</fullName>
        <ecNumber evidence="1">4.3.1.32</ecNumber>
    </recommendedName>
    <alternativeName>
        <fullName evidence="1">FO synthase subunit 1</fullName>
    </alternativeName>
</protein>